<proteinExistence type="inferred from homology"/>
<evidence type="ECO:0000255" key="1">
    <source>
        <dbReference type="HAMAP-Rule" id="MF_01325"/>
    </source>
</evidence>
<evidence type="ECO:0000305" key="2"/>
<feature type="chain" id="PRO_1000141817" description="Large ribosomal subunit protein uL3">
    <location>
        <begin position="1"/>
        <end position="209"/>
    </location>
</feature>
<feature type="modified residue" description="N5-methylglutamine" evidence="1">
    <location>
        <position position="150"/>
    </location>
</feature>
<dbReference type="EMBL" id="FM178379">
    <property type="protein sequence ID" value="CAQ78005.1"/>
    <property type="molecule type" value="Genomic_DNA"/>
</dbReference>
<dbReference type="RefSeq" id="WP_012549150.1">
    <property type="nucleotide sequence ID" value="NC_011312.1"/>
</dbReference>
<dbReference type="SMR" id="B6EPS5"/>
<dbReference type="KEGG" id="vsa:VSAL_I0320"/>
<dbReference type="eggNOG" id="COG0087">
    <property type="taxonomic scope" value="Bacteria"/>
</dbReference>
<dbReference type="HOGENOM" id="CLU_044142_4_1_6"/>
<dbReference type="Proteomes" id="UP000001730">
    <property type="component" value="Chromosome 1"/>
</dbReference>
<dbReference type="GO" id="GO:0022625">
    <property type="term" value="C:cytosolic large ribosomal subunit"/>
    <property type="evidence" value="ECO:0007669"/>
    <property type="project" value="TreeGrafter"/>
</dbReference>
<dbReference type="GO" id="GO:0019843">
    <property type="term" value="F:rRNA binding"/>
    <property type="evidence" value="ECO:0007669"/>
    <property type="project" value="UniProtKB-UniRule"/>
</dbReference>
<dbReference type="GO" id="GO:0003735">
    <property type="term" value="F:structural constituent of ribosome"/>
    <property type="evidence" value="ECO:0007669"/>
    <property type="project" value="InterPro"/>
</dbReference>
<dbReference type="GO" id="GO:0006412">
    <property type="term" value="P:translation"/>
    <property type="evidence" value="ECO:0007669"/>
    <property type="project" value="UniProtKB-UniRule"/>
</dbReference>
<dbReference type="FunFam" id="2.40.30.10:FF:000004">
    <property type="entry name" value="50S ribosomal protein L3"/>
    <property type="match status" value="1"/>
</dbReference>
<dbReference type="FunFam" id="3.30.160.810:FF:000001">
    <property type="entry name" value="50S ribosomal protein L3"/>
    <property type="match status" value="1"/>
</dbReference>
<dbReference type="Gene3D" id="3.30.160.810">
    <property type="match status" value="1"/>
</dbReference>
<dbReference type="Gene3D" id="2.40.30.10">
    <property type="entry name" value="Translation factors"/>
    <property type="match status" value="1"/>
</dbReference>
<dbReference type="HAMAP" id="MF_01325_B">
    <property type="entry name" value="Ribosomal_uL3_B"/>
    <property type="match status" value="1"/>
</dbReference>
<dbReference type="InterPro" id="IPR000597">
    <property type="entry name" value="Ribosomal_uL3"/>
</dbReference>
<dbReference type="InterPro" id="IPR019927">
    <property type="entry name" value="Ribosomal_uL3_bac/org-type"/>
</dbReference>
<dbReference type="InterPro" id="IPR019926">
    <property type="entry name" value="Ribosomal_uL3_CS"/>
</dbReference>
<dbReference type="InterPro" id="IPR009000">
    <property type="entry name" value="Transl_B-barrel_sf"/>
</dbReference>
<dbReference type="NCBIfam" id="TIGR03625">
    <property type="entry name" value="L3_bact"/>
    <property type="match status" value="1"/>
</dbReference>
<dbReference type="PANTHER" id="PTHR11229">
    <property type="entry name" value="50S RIBOSOMAL PROTEIN L3"/>
    <property type="match status" value="1"/>
</dbReference>
<dbReference type="PANTHER" id="PTHR11229:SF16">
    <property type="entry name" value="LARGE RIBOSOMAL SUBUNIT PROTEIN UL3C"/>
    <property type="match status" value="1"/>
</dbReference>
<dbReference type="Pfam" id="PF00297">
    <property type="entry name" value="Ribosomal_L3"/>
    <property type="match status" value="1"/>
</dbReference>
<dbReference type="SUPFAM" id="SSF50447">
    <property type="entry name" value="Translation proteins"/>
    <property type="match status" value="1"/>
</dbReference>
<dbReference type="PROSITE" id="PS00474">
    <property type="entry name" value="RIBOSOMAL_L3"/>
    <property type="match status" value="1"/>
</dbReference>
<keyword id="KW-0488">Methylation</keyword>
<keyword id="KW-0687">Ribonucleoprotein</keyword>
<keyword id="KW-0689">Ribosomal protein</keyword>
<keyword id="KW-0694">RNA-binding</keyword>
<keyword id="KW-0699">rRNA-binding</keyword>
<reference key="1">
    <citation type="journal article" date="2008" name="BMC Genomics">
        <title>The genome sequence of the fish pathogen Aliivibrio salmonicida strain LFI1238 shows extensive evidence of gene decay.</title>
        <authorList>
            <person name="Hjerde E."/>
            <person name="Lorentzen M.S."/>
            <person name="Holden M.T."/>
            <person name="Seeger K."/>
            <person name="Paulsen S."/>
            <person name="Bason N."/>
            <person name="Churcher C."/>
            <person name="Harris D."/>
            <person name="Norbertczak H."/>
            <person name="Quail M.A."/>
            <person name="Sanders S."/>
            <person name="Thurston S."/>
            <person name="Parkhill J."/>
            <person name="Willassen N.P."/>
            <person name="Thomson N.R."/>
        </authorList>
    </citation>
    <scope>NUCLEOTIDE SEQUENCE [LARGE SCALE GENOMIC DNA]</scope>
    <source>
        <strain>LFI1238</strain>
    </source>
</reference>
<accession>B6EPS5</accession>
<gene>
    <name evidence="1" type="primary">rplC</name>
    <name type="ordered locus">VSAL_I0320</name>
</gene>
<sequence length="209" mass="22381">MIGLVGRKVGMTRIFTEEGVSIPVTVVEVEVNRVSQVKTVETDGYNAIQVTCGSKKANRVSKPEAGHFAKAGVEAGRGLWEFRLENGEEFTVGAELSVEIFNEIKKVDVTGTSKGKGFQGAIKRWNFATQDMTHGNSLSHRAPGSIGQCQTPGRVFKGKKMAGHMGAERCTTQNLEIVRVDAERNLLLIKGAVPGSTGGNVIVKPAVKA</sequence>
<comment type="function">
    <text evidence="1">One of the primary rRNA binding proteins, it binds directly near the 3'-end of the 23S rRNA, where it nucleates assembly of the 50S subunit.</text>
</comment>
<comment type="subunit">
    <text evidence="1">Part of the 50S ribosomal subunit. Forms a cluster with proteins L14 and L19.</text>
</comment>
<comment type="PTM">
    <text evidence="1">Methylated by PrmB.</text>
</comment>
<comment type="similarity">
    <text evidence="1">Belongs to the universal ribosomal protein uL3 family.</text>
</comment>
<name>RL3_ALISL</name>
<organism>
    <name type="scientific">Aliivibrio salmonicida (strain LFI1238)</name>
    <name type="common">Vibrio salmonicida (strain LFI1238)</name>
    <dbReference type="NCBI Taxonomy" id="316275"/>
    <lineage>
        <taxon>Bacteria</taxon>
        <taxon>Pseudomonadati</taxon>
        <taxon>Pseudomonadota</taxon>
        <taxon>Gammaproteobacteria</taxon>
        <taxon>Vibrionales</taxon>
        <taxon>Vibrionaceae</taxon>
        <taxon>Aliivibrio</taxon>
    </lineage>
</organism>
<protein>
    <recommendedName>
        <fullName evidence="1">Large ribosomal subunit protein uL3</fullName>
    </recommendedName>
    <alternativeName>
        <fullName evidence="2">50S ribosomal protein L3</fullName>
    </alternativeName>
</protein>